<organism>
    <name type="scientific">Candida albicans (strain SC5314 / ATCC MYA-2876)</name>
    <name type="common">Yeast</name>
    <dbReference type="NCBI Taxonomy" id="237561"/>
    <lineage>
        <taxon>Eukaryota</taxon>
        <taxon>Fungi</taxon>
        <taxon>Dikarya</taxon>
        <taxon>Ascomycota</taxon>
        <taxon>Saccharomycotina</taxon>
        <taxon>Pichiomycetes</taxon>
        <taxon>Debaryomycetaceae</taxon>
        <taxon>Candida/Lodderomyces clade</taxon>
        <taxon>Candida</taxon>
    </lineage>
</organism>
<sequence>MSELDLEENNPLLPPSQINDENYEGSIFGEDARFCPNSRQVFRICSNLKLLIDKIIPICFKEDEITSSNSAILSDPVIDLVYQAAGGKGDGKEGTSSYKYRGSLVFCLLKVCDWYWQQAEFELSDNELYSLRALTAQTIAAIIIEREKRDKYLFLNMLCHRYTICVNGVDATPVSALEMAVDMHSTIVIGSSGYQRCIKWLWRGWIIQSSTDPHSYVLYKGAASQSFRTHFDPARIKTPLYQNILEIFLSIIYLIIFTIVVNTHSTLTGDIDFFETVLYLFTVGYILDEFIKFYHVGWNYLGFWNAFNDTMYCILTVAVCFRIASVNSHGATRIKYDEISFRVLACASPLMWSRLLLFLDAYKFVGAMIVVLKTMMKESILFFFLLFVVIVGFLQGFIGLDSSDGKNEATQRILISLVKAVIGGSSFEDMGNLVPPYASVLYYFYQFMLTVILMNILIALYSTAYAAIVENATDEYFALVAHKTLRYIRAPDQNLYVPPFNLIELLITPIGWFVSTSTWKNINYYVMLVIYSPLLAYITSDELSNARRIQYNRFKGVPDDANEIDTEWDLTDGYDEDSPGDGDDCWDRIRERNSEITEELRIQREGERQDPEFMINTHQFSEKIDKIVKPVGQASKVGVNWQIYEVIEKIDKLTNLLEVVVAENKELKKRLENKA</sequence>
<gene>
    <name type="primary">YVC1</name>
    <name type="ordered locus">CAALFM_C207730WA</name>
    <name type="ORF">CaO19.2209</name>
    <name type="ORF">CaO19.9754</name>
</gene>
<feature type="chain" id="PRO_0000431482" description="Calcium channel YVC1">
    <location>
        <begin position="1"/>
        <end position="675"/>
    </location>
</feature>
<feature type="transmembrane region" description="Helical; Name=1" evidence="2">
    <location>
        <begin position="244"/>
        <end position="264"/>
    </location>
</feature>
<feature type="transmembrane region" description="Helical; Name=2" evidence="2">
    <location>
        <begin position="271"/>
        <end position="291"/>
    </location>
</feature>
<feature type="transmembrane region" description="Helical; Name=3" evidence="2">
    <location>
        <begin position="301"/>
        <end position="321"/>
    </location>
</feature>
<feature type="transmembrane region" description="Helical; Name=4" evidence="2">
    <location>
        <begin position="355"/>
        <end position="375"/>
    </location>
</feature>
<feature type="transmembrane region" description="Helical; Name=5" evidence="2">
    <location>
        <begin position="380"/>
        <end position="400"/>
    </location>
</feature>
<feature type="transmembrane region" description="Helical; Name=6" evidence="2">
    <location>
        <begin position="440"/>
        <end position="460"/>
    </location>
</feature>
<feature type="transmembrane region" description="Helical; Name=7" evidence="2">
    <location>
        <begin position="495"/>
        <end position="515"/>
    </location>
</feature>
<feature type="transmembrane region" description="Helical; Name=8" evidence="2">
    <location>
        <begin position="518"/>
        <end position="538"/>
    </location>
</feature>
<feature type="coiled-coil region" evidence="2">
    <location>
        <begin position="644"/>
        <end position="675"/>
    </location>
</feature>
<name>YVC1_CANAL</name>
<proteinExistence type="evidence at transcript level"/>
<evidence type="ECO:0000250" key="1">
    <source>
        <dbReference type="UniProtKB" id="Q12324"/>
    </source>
</evidence>
<evidence type="ECO:0000255" key="2"/>
<evidence type="ECO:0000269" key="3">
    <source>
    </source>
</evidence>
<evidence type="ECO:0000269" key="4">
    <source>
    </source>
</evidence>
<evidence type="ECO:0000269" key="5">
    <source>
    </source>
</evidence>
<evidence type="ECO:0000303" key="6">
    <source>
    </source>
</evidence>
<evidence type="ECO:0000305" key="7"/>
<accession>Q5A2J7</accession>
<accession>A0A1D8PI36</accession>
<protein>
    <recommendedName>
        <fullName evidence="7">Calcium channel YVC1</fullName>
    </recommendedName>
    <alternativeName>
        <fullName evidence="6">Vacuolar transiant receptor potential (TPR) channel YVC1</fullName>
    </alternativeName>
    <alternativeName>
        <fullName evidence="1">Yeast vacuolar conductance protein 1</fullName>
    </alternativeName>
</protein>
<comment type="function">
    <text evidence="3 4 5">Vacuolar calcium channel involved in the release of calcium ions from the vacuole in response to hyperosmotic or alkaline stress. Required for activation of CAP1-related transcription of oxidative stress response (OSR) genes, but also for maintaining the stability of both the mitochondria and the vacuole in a potassium- and calcium-dependent manner. Contributes to pathogenicity. Plays a key role in hyphal polarized growth and re-orientation to host-signals through its contribution to the localization of the Spitzenkoerper to the hyphal tips.</text>
</comment>
<comment type="subcellular location">
    <subcellularLocation>
        <location evidence="4">Vacuole membrane</location>
        <topology evidence="2">Multi-pass membrane protein</topology>
    </subcellularLocation>
</comment>
<comment type="induction">
    <text evidence="3">Expression is down-regulated in response to alkaline pH when CRZ1 or RIM101 are deleted.</text>
</comment>
<comment type="disruption phenotype">
    <text evidence="4 5">Leads to hypersensitivity to oxidative stress, increased sensitivity to killing by macrophages, reduced ability to invade epithelium cells, and attenuated virulence in a mouse model. Shows defects in hyphal maintenance, hyphal growth and flocculation. Prevents the localization of the Spitzenkoerper to hyphal tips. Enhances mitochondrial depolarization and apoptosis.</text>
</comment>
<comment type="similarity">
    <text evidence="7">Belongs to the transient receptor (TC 1.A.4) family.</text>
</comment>
<reference key="1">
    <citation type="journal article" date="2004" name="Proc. Natl. Acad. Sci. U.S.A.">
        <title>The diploid genome sequence of Candida albicans.</title>
        <authorList>
            <person name="Jones T."/>
            <person name="Federspiel N.A."/>
            <person name="Chibana H."/>
            <person name="Dungan J."/>
            <person name="Kalman S."/>
            <person name="Magee B.B."/>
            <person name="Newport G."/>
            <person name="Thorstenson Y.R."/>
            <person name="Agabian N."/>
            <person name="Magee P.T."/>
            <person name="Davis R.W."/>
            <person name="Scherer S."/>
        </authorList>
    </citation>
    <scope>NUCLEOTIDE SEQUENCE [LARGE SCALE GENOMIC DNA]</scope>
    <source>
        <strain>SC5314 / ATCC MYA-2876</strain>
    </source>
</reference>
<reference key="2">
    <citation type="journal article" date="2007" name="Genome Biol.">
        <title>Assembly of the Candida albicans genome into sixteen supercontigs aligned on the eight chromosomes.</title>
        <authorList>
            <person name="van het Hoog M."/>
            <person name="Rast T.J."/>
            <person name="Martchenko M."/>
            <person name="Grindle S."/>
            <person name="Dignard D."/>
            <person name="Hogues H."/>
            <person name="Cuomo C."/>
            <person name="Berriman M."/>
            <person name="Scherer S."/>
            <person name="Magee B.B."/>
            <person name="Whiteway M."/>
            <person name="Chibana H."/>
            <person name="Nantel A."/>
            <person name="Magee P.T."/>
        </authorList>
    </citation>
    <scope>GENOME REANNOTATION</scope>
    <source>
        <strain>SC5314 / ATCC MYA-2876</strain>
    </source>
</reference>
<reference key="3">
    <citation type="journal article" date="2013" name="Genome Biol.">
        <title>Assembly of a phased diploid Candida albicans genome facilitates allele-specific measurements and provides a simple model for repeat and indel structure.</title>
        <authorList>
            <person name="Muzzey D."/>
            <person name="Schwartz K."/>
            <person name="Weissman J.S."/>
            <person name="Sherlock G."/>
        </authorList>
    </citation>
    <scope>NUCLEOTIDE SEQUENCE [LARGE SCALE GENOMIC DNA]</scope>
    <scope>GENOME REANNOTATION</scope>
    <source>
        <strain>SC5314 / ATCC MYA-2876</strain>
    </source>
</reference>
<reference key="4">
    <citation type="journal article" date="2011" name="FEMS Yeast Res.">
        <title>Alkaline stress triggers an immediate calcium fluctuation in Candida albicans mediated by Rim101p and Crz1p transcription factors.</title>
        <authorList>
            <person name="Wang H."/>
            <person name="Liang Y."/>
            <person name="Zhang B."/>
            <person name="Zheng W."/>
            <person name="Xing L."/>
            <person name="Li M."/>
        </authorList>
    </citation>
    <scope>INDUCTION</scope>
    <scope>FUNCTION</scope>
</reference>
<reference key="5">
    <citation type="journal article" date="2014" name="Free Radic. Biol. Med.">
        <title>Interaction between the vacuole, the mitochondria and oxidative stress response is governed by the transient receptor potential channel in Candida albicans.</title>
        <authorList>
            <person name="Yu Q."/>
            <person name="Zhang B."/>
            <person name="Yang B."/>
            <person name="Chen J."/>
            <person name="Wang H."/>
            <person name="Jia C."/>
            <person name="Ding X."/>
            <person name="Xu N."/>
            <person name="Dong Y."/>
            <person name="Zhang B."/>
            <person name="Xing L."/>
            <person name="Li M."/>
        </authorList>
    </citation>
    <scope>DISRUPTION PHENOTYPE</scope>
    <scope>FUNCTION</scope>
</reference>
<reference key="6">
    <citation type="journal article" date="2014" name="Int. J. Med. Microbiol.">
        <title>A novel role of the vacuolar calcium channel Yvc1 in stress response, morphogenesis and pathogenicity of Candida albicans.</title>
        <authorList>
            <person name="Yu Q."/>
            <person name="Wang F."/>
            <person name="Zhao Q."/>
            <person name="Chen J."/>
            <person name="Zhang B."/>
            <person name="Ding X."/>
            <person name="Wang H."/>
            <person name="Yang B."/>
            <person name="Lu G."/>
            <person name="Zhang B."/>
            <person name="Li M."/>
        </authorList>
    </citation>
    <scope>SUBCELLULAR LOCATION</scope>
    <scope>DISRUPTION PHENOTYPE</scope>
    <scope>FUNCTION</scope>
</reference>
<keyword id="KW-0106">Calcium</keyword>
<keyword id="KW-0107">Calcium channel</keyword>
<keyword id="KW-0109">Calcium transport</keyword>
<keyword id="KW-0175">Coiled coil</keyword>
<keyword id="KW-0407">Ion channel</keyword>
<keyword id="KW-0406">Ion transport</keyword>
<keyword id="KW-0472">Membrane</keyword>
<keyword id="KW-1185">Reference proteome</keyword>
<keyword id="KW-0346">Stress response</keyword>
<keyword id="KW-0812">Transmembrane</keyword>
<keyword id="KW-1133">Transmembrane helix</keyword>
<keyword id="KW-0813">Transport</keyword>
<keyword id="KW-0926">Vacuole</keyword>
<keyword id="KW-0843">Virulence</keyword>
<dbReference type="EMBL" id="CP017624">
    <property type="protein sequence ID" value="AOW27771.1"/>
    <property type="molecule type" value="Genomic_DNA"/>
</dbReference>
<dbReference type="RefSeq" id="XP_716049.2">
    <property type="nucleotide sequence ID" value="XM_710956.2"/>
</dbReference>
<dbReference type="SMR" id="Q5A2J7"/>
<dbReference type="FunCoup" id="Q5A2J7">
    <property type="interactions" value="25"/>
</dbReference>
<dbReference type="STRING" id="237561.Q5A2J7"/>
<dbReference type="EnsemblFungi" id="C2_07730W_A-T">
    <property type="protein sequence ID" value="C2_07730W_A-T-p1"/>
    <property type="gene ID" value="C2_07730W_A"/>
</dbReference>
<dbReference type="GeneID" id="3642303"/>
<dbReference type="KEGG" id="cal:CAALFM_C207730WA"/>
<dbReference type="CGD" id="CAL0000187018">
    <property type="gene designation" value="YVC1"/>
</dbReference>
<dbReference type="VEuPathDB" id="FungiDB:C2_07730W_A"/>
<dbReference type="eggNOG" id="ENOG502QTER">
    <property type="taxonomic scope" value="Eukaryota"/>
</dbReference>
<dbReference type="HOGENOM" id="CLU_014123_0_0_1"/>
<dbReference type="InParanoid" id="Q5A2J7"/>
<dbReference type="OrthoDB" id="301415at2759"/>
<dbReference type="PHI-base" id="PHI:3993"/>
<dbReference type="PRO" id="PR:Q5A2J7"/>
<dbReference type="Proteomes" id="UP000000559">
    <property type="component" value="Chromosome 2"/>
</dbReference>
<dbReference type="GO" id="GO:0000329">
    <property type="term" value="C:fungal-type vacuole membrane"/>
    <property type="evidence" value="ECO:0000314"/>
    <property type="project" value="CGD"/>
</dbReference>
<dbReference type="GO" id="GO:0005886">
    <property type="term" value="C:plasma membrane"/>
    <property type="evidence" value="ECO:0000318"/>
    <property type="project" value="GO_Central"/>
</dbReference>
<dbReference type="GO" id="GO:1990816">
    <property type="term" value="C:vacuole-mitochondrion membrane contact site"/>
    <property type="evidence" value="ECO:0007669"/>
    <property type="project" value="EnsemblFungi"/>
</dbReference>
<dbReference type="GO" id="GO:0005262">
    <property type="term" value="F:calcium channel activity"/>
    <property type="evidence" value="ECO:0000318"/>
    <property type="project" value="GO_Central"/>
</dbReference>
<dbReference type="GO" id="GO:0005227">
    <property type="term" value="F:calcium-activated cation channel activity"/>
    <property type="evidence" value="ECO:0007669"/>
    <property type="project" value="EnsemblFungi"/>
</dbReference>
<dbReference type="GO" id="GO:0005267">
    <property type="term" value="F:potassium channel activity"/>
    <property type="evidence" value="ECO:0007669"/>
    <property type="project" value="EnsemblFungi"/>
</dbReference>
<dbReference type="GO" id="GO:0005272">
    <property type="term" value="F:sodium channel activity"/>
    <property type="evidence" value="ECO:0007669"/>
    <property type="project" value="EnsemblFungi"/>
</dbReference>
<dbReference type="GO" id="GO:0005244">
    <property type="term" value="F:voltage-gated monoatomic ion channel activity"/>
    <property type="evidence" value="ECO:0007669"/>
    <property type="project" value="EnsemblFungi"/>
</dbReference>
<dbReference type="GO" id="GO:0098703">
    <property type="term" value="P:calcium ion import across plasma membrane"/>
    <property type="evidence" value="ECO:0000318"/>
    <property type="project" value="GO_Central"/>
</dbReference>
<dbReference type="GO" id="GO:0000128">
    <property type="term" value="P:flocculation"/>
    <property type="evidence" value="ECO:0000315"/>
    <property type="project" value="CGD"/>
</dbReference>
<dbReference type="GO" id="GO:0006874">
    <property type="term" value="P:intracellular calcium ion homeostasis"/>
    <property type="evidence" value="ECO:0000315"/>
    <property type="project" value="CGD"/>
</dbReference>
<dbReference type="GO" id="GO:0036267">
    <property type="term" value="P:invasive filamentous growth"/>
    <property type="evidence" value="ECO:0000315"/>
    <property type="project" value="CGD"/>
</dbReference>
<dbReference type="InterPro" id="IPR056337">
    <property type="entry name" value="LHD_YVC1"/>
</dbReference>
<dbReference type="InterPro" id="IPR052971">
    <property type="entry name" value="TRP_calcium_channel"/>
</dbReference>
<dbReference type="InterPro" id="IPR056336">
    <property type="entry name" value="YVC1_C"/>
</dbReference>
<dbReference type="PANTHER" id="PTHR35859:SF5">
    <property type="entry name" value="ION TRANSPORT DOMAIN-CONTAINING PROTEIN"/>
    <property type="match status" value="1"/>
</dbReference>
<dbReference type="PANTHER" id="PTHR35859">
    <property type="entry name" value="NONSELECTIVE CATION CHANNEL PROTEIN"/>
    <property type="match status" value="1"/>
</dbReference>
<dbReference type="Pfam" id="PF23190">
    <property type="entry name" value="LHD_TRPY1"/>
    <property type="match status" value="1"/>
</dbReference>
<dbReference type="Pfam" id="PF23317">
    <property type="entry name" value="YVC1_C"/>
    <property type="match status" value="1"/>
</dbReference>